<dbReference type="EMBL" id="AL009126">
    <property type="protein sequence ID" value="CAB13656.1"/>
    <property type="molecule type" value="Genomic_DNA"/>
</dbReference>
<dbReference type="PIR" id="B69889">
    <property type="entry name" value="B69889"/>
</dbReference>
<dbReference type="RefSeq" id="NP_389655.1">
    <property type="nucleotide sequence ID" value="NC_000964.3"/>
</dbReference>
<dbReference type="RefSeq" id="WP_009967329.1">
    <property type="nucleotide sequence ID" value="NZ_OZ025638.1"/>
</dbReference>
<dbReference type="FunCoup" id="O31805">
    <property type="interactions" value="12"/>
</dbReference>
<dbReference type="STRING" id="224308.BSU17720"/>
<dbReference type="PaxDb" id="224308-BSU17720"/>
<dbReference type="DNASU" id="939521"/>
<dbReference type="EnsemblBacteria" id="CAB13656">
    <property type="protein sequence ID" value="CAB13656"/>
    <property type="gene ID" value="BSU_17720"/>
</dbReference>
<dbReference type="GeneID" id="939521"/>
<dbReference type="KEGG" id="bsu:BSU17720"/>
<dbReference type="PATRIC" id="fig|224308.179.peg.1929"/>
<dbReference type="eggNOG" id="ENOG50323YG">
    <property type="taxonomic scope" value="Bacteria"/>
</dbReference>
<dbReference type="InParanoid" id="O31805"/>
<dbReference type="OrthoDB" id="2912061at2"/>
<dbReference type="BioCyc" id="BSUB:BSU17720-MONOMER"/>
<dbReference type="Proteomes" id="UP000001570">
    <property type="component" value="Chromosome"/>
</dbReference>
<feature type="signal peptide" evidence="1">
    <location>
        <begin position="1"/>
        <end position="25"/>
    </location>
</feature>
<feature type="chain" id="PRO_0000013715" description="Uncharacterized protein YndA">
    <location>
        <begin position="26"/>
        <end position="132"/>
    </location>
</feature>
<proteinExistence type="inferred from homology"/>
<organism>
    <name type="scientific">Bacillus subtilis (strain 168)</name>
    <dbReference type="NCBI Taxonomy" id="224308"/>
    <lineage>
        <taxon>Bacteria</taxon>
        <taxon>Bacillati</taxon>
        <taxon>Bacillota</taxon>
        <taxon>Bacilli</taxon>
        <taxon>Bacillales</taxon>
        <taxon>Bacillaceae</taxon>
        <taxon>Bacillus</taxon>
    </lineage>
</organism>
<keyword id="KW-1185">Reference proteome</keyword>
<keyword id="KW-0732">Signal</keyword>
<evidence type="ECO:0000255" key="1"/>
<accession>O31805</accession>
<protein>
    <recommendedName>
        <fullName>Uncharacterized protein YndA</fullName>
    </recommendedName>
</protein>
<gene>
    <name type="primary">yndA</name>
    <name type="ordered locus">BSU17720</name>
</gene>
<name>YNDA_BACSU</name>
<reference key="1">
    <citation type="journal article" date="1997" name="Nature">
        <title>The complete genome sequence of the Gram-positive bacterium Bacillus subtilis.</title>
        <authorList>
            <person name="Kunst F."/>
            <person name="Ogasawara N."/>
            <person name="Moszer I."/>
            <person name="Albertini A.M."/>
            <person name="Alloni G."/>
            <person name="Azevedo V."/>
            <person name="Bertero M.G."/>
            <person name="Bessieres P."/>
            <person name="Bolotin A."/>
            <person name="Borchert S."/>
            <person name="Borriss R."/>
            <person name="Boursier L."/>
            <person name="Brans A."/>
            <person name="Braun M."/>
            <person name="Brignell S.C."/>
            <person name="Bron S."/>
            <person name="Brouillet S."/>
            <person name="Bruschi C.V."/>
            <person name="Caldwell B."/>
            <person name="Capuano V."/>
            <person name="Carter N.M."/>
            <person name="Choi S.-K."/>
            <person name="Codani J.-J."/>
            <person name="Connerton I.F."/>
            <person name="Cummings N.J."/>
            <person name="Daniel R.A."/>
            <person name="Denizot F."/>
            <person name="Devine K.M."/>
            <person name="Duesterhoeft A."/>
            <person name="Ehrlich S.D."/>
            <person name="Emmerson P.T."/>
            <person name="Entian K.-D."/>
            <person name="Errington J."/>
            <person name="Fabret C."/>
            <person name="Ferrari E."/>
            <person name="Foulger D."/>
            <person name="Fritz C."/>
            <person name="Fujita M."/>
            <person name="Fujita Y."/>
            <person name="Fuma S."/>
            <person name="Galizzi A."/>
            <person name="Galleron N."/>
            <person name="Ghim S.-Y."/>
            <person name="Glaser P."/>
            <person name="Goffeau A."/>
            <person name="Golightly E.J."/>
            <person name="Grandi G."/>
            <person name="Guiseppi G."/>
            <person name="Guy B.J."/>
            <person name="Haga K."/>
            <person name="Haiech J."/>
            <person name="Harwood C.R."/>
            <person name="Henaut A."/>
            <person name="Hilbert H."/>
            <person name="Holsappel S."/>
            <person name="Hosono S."/>
            <person name="Hullo M.-F."/>
            <person name="Itaya M."/>
            <person name="Jones L.-M."/>
            <person name="Joris B."/>
            <person name="Karamata D."/>
            <person name="Kasahara Y."/>
            <person name="Klaerr-Blanchard M."/>
            <person name="Klein C."/>
            <person name="Kobayashi Y."/>
            <person name="Koetter P."/>
            <person name="Koningstein G."/>
            <person name="Krogh S."/>
            <person name="Kumano M."/>
            <person name="Kurita K."/>
            <person name="Lapidus A."/>
            <person name="Lardinois S."/>
            <person name="Lauber J."/>
            <person name="Lazarevic V."/>
            <person name="Lee S.-M."/>
            <person name="Levine A."/>
            <person name="Liu H."/>
            <person name="Masuda S."/>
            <person name="Mauel C."/>
            <person name="Medigue C."/>
            <person name="Medina N."/>
            <person name="Mellado R.P."/>
            <person name="Mizuno M."/>
            <person name="Moestl D."/>
            <person name="Nakai S."/>
            <person name="Noback M."/>
            <person name="Noone D."/>
            <person name="O'Reilly M."/>
            <person name="Ogawa K."/>
            <person name="Ogiwara A."/>
            <person name="Oudega B."/>
            <person name="Park S.-H."/>
            <person name="Parro V."/>
            <person name="Pohl T.M."/>
            <person name="Portetelle D."/>
            <person name="Porwollik S."/>
            <person name="Prescott A.M."/>
            <person name="Presecan E."/>
            <person name="Pujic P."/>
            <person name="Purnelle B."/>
            <person name="Rapoport G."/>
            <person name="Rey M."/>
            <person name="Reynolds S."/>
            <person name="Rieger M."/>
            <person name="Rivolta C."/>
            <person name="Rocha E."/>
            <person name="Roche B."/>
            <person name="Rose M."/>
            <person name="Sadaie Y."/>
            <person name="Sato T."/>
            <person name="Scanlan E."/>
            <person name="Schleich S."/>
            <person name="Schroeter R."/>
            <person name="Scoffone F."/>
            <person name="Sekiguchi J."/>
            <person name="Sekowska A."/>
            <person name="Seror S.J."/>
            <person name="Serror P."/>
            <person name="Shin B.-S."/>
            <person name="Soldo B."/>
            <person name="Sorokin A."/>
            <person name="Tacconi E."/>
            <person name="Takagi T."/>
            <person name="Takahashi H."/>
            <person name="Takemaru K."/>
            <person name="Takeuchi M."/>
            <person name="Tamakoshi A."/>
            <person name="Tanaka T."/>
            <person name="Terpstra P."/>
            <person name="Tognoni A."/>
            <person name="Tosato V."/>
            <person name="Uchiyama S."/>
            <person name="Vandenbol M."/>
            <person name="Vannier F."/>
            <person name="Vassarotti A."/>
            <person name="Viari A."/>
            <person name="Wambutt R."/>
            <person name="Wedler E."/>
            <person name="Wedler H."/>
            <person name="Weitzenegger T."/>
            <person name="Winters P."/>
            <person name="Wipat A."/>
            <person name="Yamamoto H."/>
            <person name="Yamane K."/>
            <person name="Yasumoto K."/>
            <person name="Yata K."/>
            <person name="Yoshida K."/>
            <person name="Yoshikawa H.-F."/>
            <person name="Zumstein E."/>
            <person name="Yoshikawa H."/>
            <person name="Danchin A."/>
        </authorList>
    </citation>
    <scope>NUCLEOTIDE SEQUENCE [LARGE SCALE GENOMIC DNA]</scope>
    <source>
        <strain>168</strain>
    </source>
</reference>
<sequence>MRFTKVVGFLSVLGLAAVFPLTAQAEKAGTAGAGEWDKLGTYTYTYSSPTVYSTGGDFRVCLSGSTPFSVSLHLYEDDPGDNPDDYVGANYFSPGECHTFGSIGKFVDGSNNKAEFFVTDYSGKSKTVTFYD</sequence>